<keyword id="KW-0030">Aminoacyl-tRNA synthetase</keyword>
<keyword id="KW-0067">ATP-binding</keyword>
<keyword id="KW-0963">Cytoplasm</keyword>
<keyword id="KW-0436">Ligase</keyword>
<keyword id="KW-0547">Nucleotide-binding</keyword>
<keyword id="KW-0648">Protein biosynthesis</keyword>
<gene>
    <name evidence="1" type="primary">glyQ</name>
    <name type="ordered locus">gbs0258</name>
</gene>
<sequence>MSKKLTFQEIILTLQQFWNDQGCMLMQAYDNEKGAGTMSPYTFLRAIGPEPWNAAYVEPSRRPADGRYGENPNRLYQHHQFQVVMKPSPSNVQELYLKSLELLGINPLEHDIRFVEDNWENPSTGSAGLGWEVWLDGMEITQFTYFQQVGGLQTGPVTSEVTYGLERLASYIQEVDSVYDIEWAPGVKYGEIFTQPEYEHSKYSFEISDQVMLLENFEKFEREAKRALEEGLVHPAYDYVLKCSHTFNLLDARGAVSVTERAGYITRIRNLARVVAKTFVAERKKLGFPLLDEETRIKLLAEED</sequence>
<comment type="catalytic activity">
    <reaction evidence="1">
        <text>tRNA(Gly) + glycine + ATP = glycyl-tRNA(Gly) + AMP + diphosphate</text>
        <dbReference type="Rhea" id="RHEA:16013"/>
        <dbReference type="Rhea" id="RHEA-COMP:9664"/>
        <dbReference type="Rhea" id="RHEA-COMP:9683"/>
        <dbReference type="ChEBI" id="CHEBI:30616"/>
        <dbReference type="ChEBI" id="CHEBI:33019"/>
        <dbReference type="ChEBI" id="CHEBI:57305"/>
        <dbReference type="ChEBI" id="CHEBI:78442"/>
        <dbReference type="ChEBI" id="CHEBI:78522"/>
        <dbReference type="ChEBI" id="CHEBI:456215"/>
        <dbReference type="EC" id="6.1.1.14"/>
    </reaction>
</comment>
<comment type="subunit">
    <text evidence="1">Tetramer of two alpha and two beta subunits.</text>
</comment>
<comment type="subcellular location">
    <subcellularLocation>
        <location evidence="1">Cytoplasm</location>
    </subcellularLocation>
</comment>
<comment type="similarity">
    <text evidence="1">Belongs to the class-II aminoacyl-tRNA synthetase family.</text>
</comment>
<feature type="chain" id="PRO_0000072866" description="Glycine--tRNA ligase alpha subunit">
    <location>
        <begin position="1"/>
        <end position="304"/>
    </location>
</feature>
<evidence type="ECO:0000255" key="1">
    <source>
        <dbReference type="HAMAP-Rule" id="MF_00254"/>
    </source>
</evidence>
<organism>
    <name type="scientific">Streptococcus agalactiae serotype III (strain NEM316)</name>
    <dbReference type="NCBI Taxonomy" id="211110"/>
    <lineage>
        <taxon>Bacteria</taxon>
        <taxon>Bacillati</taxon>
        <taxon>Bacillota</taxon>
        <taxon>Bacilli</taxon>
        <taxon>Lactobacillales</taxon>
        <taxon>Streptococcaceae</taxon>
        <taxon>Streptococcus</taxon>
    </lineage>
</organism>
<name>SYGA_STRA3</name>
<accession>Q8CX31</accession>
<reference key="1">
    <citation type="journal article" date="2002" name="Mol. Microbiol.">
        <title>Genome sequence of Streptococcus agalactiae, a pathogen causing invasive neonatal disease.</title>
        <authorList>
            <person name="Glaser P."/>
            <person name="Rusniok C."/>
            <person name="Buchrieser C."/>
            <person name="Chevalier F."/>
            <person name="Frangeul L."/>
            <person name="Msadek T."/>
            <person name="Zouine M."/>
            <person name="Couve E."/>
            <person name="Lalioui L."/>
            <person name="Poyart C."/>
            <person name="Trieu-Cuot P."/>
            <person name="Kunst F."/>
        </authorList>
    </citation>
    <scope>NUCLEOTIDE SEQUENCE [LARGE SCALE GENOMIC DNA]</scope>
    <source>
        <strain>NEM316</strain>
    </source>
</reference>
<protein>
    <recommendedName>
        <fullName evidence="1">Glycine--tRNA ligase alpha subunit</fullName>
        <ecNumber evidence="1">6.1.1.14</ecNumber>
    </recommendedName>
    <alternativeName>
        <fullName evidence="1">Glycyl-tRNA synthetase alpha subunit</fullName>
        <shortName evidence="1">GlyRS</shortName>
    </alternativeName>
</protein>
<dbReference type="EC" id="6.1.1.14" evidence="1"/>
<dbReference type="EMBL" id="AL766844">
    <property type="protein sequence ID" value="CAD45903.1"/>
    <property type="molecule type" value="Genomic_DNA"/>
</dbReference>
<dbReference type="RefSeq" id="WP_000038759.1">
    <property type="nucleotide sequence ID" value="NC_004368.1"/>
</dbReference>
<dbReference type="SMR" id="Q8CX31"/>
<dbReference type="KEGG" id="san:glyQ"/>
<dbReference type="eggNOG" id="COG0752">
    <property type="taxonomic scope" value="Bacteria"/>
</dbReference>
<dbReference type="HOGENOM" id="CLU_057066_1_0_9"/>
<dbReference type="Proteomes" id="UP000000823">
    <property type="component" value="Chromosome"/>
</dbReference>
<dbReference type="GO" id="GO:0005829">
    <property type="term" value="C:cytosol"/>
    <property type="evidence" value="ECO:0007669"/>
    <property type="project" value="TreeGrafter"/>
</dbReference>
<dbReference type="GO" id="GO:0005524">
    <property type="term" value="F:ATP binding"/>
    <property type="evidence" value="ECO:0007669"/>
    <property type="project" value="UniProtKB-UniRule"/>
</dbReference>
<dbReference type="GO" id="GO:0140096">
    <property type="term" value="F:catalytic activity, acting on a protein"/>
    <property type="evidence" value="ECO:0007669"/>
    <property type="project" value="UniProtKB-ARBA"/>
</dbReference>
<dbReference type="GO" id="GO:0004820">
    <property type="term" value="F:glycine-tRNA ligase activity"/>
    <property type="evidence" value="ECO:0007669"/>
    <property type="project" value="UniProtKB-UniRule"/>
</dbReference>
<dbReference type="GO" id="GO:0016740">
    <property type="term" value="F:transferase activity"/>
    <property type="evidence" value="ECO:0007669"/>
    <property type="project" value="UniProtKB-ARBA"/>
</dbReference>
<dbReference type="GO" id="GO:0006426">
    <property type="term" value="P:glycyl-tRNA aminoacylation"/>
    <property type="evidence" value="ECO:0007669"/>
    <property type="project" value="UniProtKB-UniRule"/>
</dbReference>
<dbReference type="CDD" id="cd00733">
    <property type="entry name" value="GlyRS_alpha_core"/>
    <property type="match status" value="1"/>
</dbReference>
<dbReference type="FunFam" id="3.30.930.10:FF:000006">
    <property type="entry name" value="Glycine--tRNA ligase alpha subunit"/>
    <property type="match status" value="1"/>
</dbReference>
<dbReference type="Gene3D" id="3.30.930.10">
    <property type="entry name" value="Bira Bifunctional Protein, Domain 2"/>
    <property type="match status" value="1"/>
</dbReference>
<dbReference type="Gene3D" id="1.20.58.180">
    <property type="entry name" value="Class II aaRS and biotin synthetases, domain 2"/>
    <property type="match status" value="1"/>
</dbReference>
<dbReference type="HAMAP" id="MF_00254">
    <property type="entry name" value="Gly_tRNA_synth_alpha"/>
    <property type="match status" value="1"/>
</dbReference>
<dbReference type="InterPro" id="IPR045864">
    <property type="entry name" value="aa-tRNA-synth_II/BPL/LPL"/>
</dbReference>
<dbReference type="InterPro" id="IPR006194">
    <property type="entry name" value="Gly-tRNA-synth_heterodimer"/>
</dbReference>
<dbReference type="InterPro" id="IPR002310">
    <property type="entry name" value="Gly-tRNA_ligase_asu"/>
</dbReference>
<dbReference type="NCBIfam" id="TIGR00388">
    <property type="entry name" value="glyQ"/>
    <property type="match status" value="1"/>
</dbReference>
<dbReference type="NCBIfam" id="NF006827">
    <property type="entry name" value="PRK09348.1"/>
    <property type="match status" value="1"/>
</dbReference>
<dbReference type="PANTHER" id="PTHR30075:SF2">
    <property type="entry name" value="GLYCINE--TRNA LIGASE, CHLOROPLASTIC_MITOCHONDRIAL 2"/>
    <property type="match status" value="1"/>
</dbReference>
<dbReference type="PANTHER" id="PTHR30075">
    <property type="entry name" value="GLYCYL-TRNA SYNTHETASE"/>
    <property type="match status" value="1"/>
</dbReference>
<dbReference type="Pfam" id="PF02091">
    <property type="entry name" value="tRNA-synt_2e"/>
    <property type="match status" value="1"/>
</dbReference>
<dbReference type="PRINTS" id="PR01044">
    <property type="entry name" value="TRNASYNTHGA"/>
</dbReference>
<dbReference type="SUPFAM" id="SSF55681">
    <property type="entry name" value="Class II aaRS and biotin synthetases"/>
    <property type="match status" value="1"/>
</dbReference>
<dbReference type="PROSITE" id="PS50861">
    <property type="entry name" value="AA_TRNA_LIGASE_II_GLYAB"/>
    <property type="match status" value="1"/>
</dbReference>
<proteinExistence type="inferred from homology"/>